<gene>
    <name type="primary">Csgalnact2</name>
    <name type="synonym">Chgn2</name>
    <name type="synonym">Galnact2</name>
</gene>
<reference key="1">
    <citation type="journal article" date="2005" name="Science">
        <title>The transcriptional landscape of the mammalian genome.</title>
        <authorList>
            <person name="Carninci P."/>
            <person name="Kasukawa T."/>
            <person name="Katayama S."/>
            <person name="Gough J."/>
            <person name="Frith M.C."/>
            <person name="Maeda N."/>
            <person name="Oyama R."/>
            <person name="Ravasi T."/>
            <person name="Lenhard B."/>
            <person name="Wells C."/>
            <person name="Kodzius R."/>
            <person name="Shimokawa K."/>
            <person name="Bajic V.B."/>
            <person name="Brenner S.E."/>
            <person name="Batalov S."/>
            <person name="Forrest A.R."/>
            <person name="Zavolan M."/>
            <person name="Davis M.J."/>
            <person name="Wilming L.G."/>
            <person name="Aidinis V."/>
            <person name="Allen J.E."/>
            <person name="Ambesi-Impiombato A."/>
            <person name="Apweiler R."/>
            <person name="Aturaliya R.N."/>
            <person name="Bailey T.L."/>
            <person name="Bansal M."/>
            <person name="Baxter L."/>
            <person name="Beisel K.W."/>
            <person name="Bersano T."/>
            <person name="Bono H."/>
            <person name="Chalk A.M."/>
            <person name="Chiu K.P."/>
            <person name="Choudhary V."/>
            <person name="Christoffels A."/>
            <person name="Clutterbuck D.R."/>
            <person name="Crowe M.L."/>
            <person name="Dalla E."/>
            <person name="Dalrymple B.P."/>
            <person name="de Bono B."/>
            <person name="Della Gatta G."/>
            <person name="di Bernardo D."/>
            <person name="Down T."/>
            <person name="Engstrom P."/>
            <person name="Fagiolini M."/>
            <person name="Faulkner G."/>
            <person name="Fletcher C.F."/>
            <person name="Fukushima T."/>
            <person name="Furuno M."/>
            <person name="Futaki S."/>
            <person name="Gariboldi M."/>
            <person name="Georgii-Hemming P."/>
            <person name="Gingeras T.R."/>
            <person name="Gojobori T."/>
            <person name="Green R.E."/>
            <person name="Gustincich S."/>
            <person name="Harbers M."/>
            <person name="Hayashi Y."/>
            <person name="Hensch T.K."/>
            <person name="Hirokawa N."/>
            <person name="Hill D."/>
            <person name="Huminiecki L."/>
            <person name="Iacono M."/>
            <person name="Ikeo K."/>
            <person name="Iwama A."/>
            <person name="Ishikawa T."/>
            <person name="Jakt M."/>
            <person name="Kanapin A."/>
            <person name="Katoh M."/>
            <person name="Kawasawa Y."/>
            <person name="Kelso J."/>
            <person name="Kitamura H."/>
            <person name="Kitano H."/>
            <person name="Kollias G."/>
            <person name="Krishnan S.P."/>
            <person name="Kruger A."/>
            <person name="Kummerfeld S.K."/>
            <person name="Kurochkin I.V."/>
            <person name="Lareau L.F."/>
            <person name="Lazarevic D."/>
            <person name="Lipovich L."/>
            <person name="Liu J."/>
            <person name="Liuni S."/>
            <person name="McWilliam S."/>
            <person name="Madan Babu M."/>
            <person name="Madera M."/>
            <person name="Marchionni L."/>
            <person name="Matsuda H."/>
            <person name="Matsuzawa S."/>
            <person name="Miki H."/>
            <person name="Mignone F."/>
            <person name="Miyake S."/>
            <person name="Morris K."/>
            <person name="Mottagui-Tabar S."/>
            <person name="Mulder N."/>
            <person name="Nakano N."/>
            <person name="Nakauchi H."/>
            <person name="Ng P."/>
            <person name="Nilsson R."/>
            <person name="Nishiguchi S."/>
            <person name="Nishikawa S."/>
            <person name="Nori F."/>
            <person name="Ohara O."/>
            <person name="Okazaki Y."/>
            <person name="Orlando V."/>
            <person name="Pang K.C."/>
            <person name="Pavan W.J."/>
            <person name="Pavesi G."/>
            <person name="Pesole G."/>
            <person name="Petrovsky N."/>
            <person name="Piazza S."/>
            <person name="Reed J."/>
            <person name="Reid J.F."/>
            <person name="Ring B.Z."/>
            <person name="Ringwald M."/>
            <person name="Rost B."/>
            <person name="Ruan Y."/>
            <person name="Salzberg S.L."/>
            <person name="Sandelin A."/>
            <person name="Schneider C."/>
            <person name="Schoenbach C."/>
            <person name="Sekiguchi K."/>
            <person name="Semple C.A."/>
            <person name="Seno S."/>
            <person name="Sessa L."/>
            <person name="Sheng Y."/>
            <person name="Shibata Y."/>
            <person name="Shimada H."/>
            <person name="Shimada K."/>
            <person name="Silva D."/>
            <person name="Sinclair B."/>
            <person name="Sperling S."/>
            <person name="Stupka E."/>
            <person name="Sugiura K."/>
            <person name="Sultana R."/>
            <person name="Takenaka Y."/>
            <person name="Taki K."/>
            <person name="Tammoja K."/>
            <person name="Tan S.L."/>
            <person name="Tang S."/>
            <person name="Taylor M.S."/>
            <person name="Tegner J."/>
            <person name="Teichmann S.A."/>
            <person name="Ueda H.R."/>
            <person name="van Nimwegen E."/>
            <person name="Verardo R."/>
            <person name="Wei C.L."/>
            <person name="Yagi K."/>
            <person name="Yamanishi H."/>
            <person name="Zabarovsky E."/>
            <person name="Zhu S."/>
            <person name="Zimmer A."/>
            <person name="Hide W."/>
            <person name="Bult C."/>
            <person name="Grimmond S.M."/>
            <person name="Teasdale R.D."/>
            <person name="Liu E.T."/>
            <person name="Brusic V."/>
            <person name="Quackenbush J."/>
            <person name="Wahlestedt C."/>
            <person name="Mattick J.S."/>
            <person name="Hume D.A."/>
            <person name="Kai C."/>
            <person name="Sasaki D."/>
            <person name="Tomaru Y."/>
            <person name="Fukuda S."/>
            <person name="Kanamori-Katayama M."/>
            <person name="Suzuki M."/>
            <person name="Aoki J."/>
            <person name="Arakawa T."/>
            <person name="Iida J."/>
            <person name="Imamura K."/>
            <person name="Itoh M."/>
            <person name="Kato T."/>
            <person name="Kawaji H."/>
            <person name="Kawagashira N."/>
            <person name="Kawashima T."/>
            <person name="Kojima M."/>
            <person name="Kondo S."/>
            <person name="Konno H."/>
            <person name="Nakano K."/>
            <person name="Ninomiya N."/>
            <person name="Nishio T."/>
            <person name="Okada M."/>
            <person name="Plessy C."/>
            <person name="Shibata K."/>
            <person name="Shiraki T."/>
            <person name="Suzuki S."/>
            <person name="Tagami M."/>
            <person name="Waki K."/>
            <person name="Watahiki A."/>
            <person name="Okamura-Oho Y."/>
            <person name="Suzuki H."/>
            <person name="Kawai J."/>
            <person name="Hayashizaki Y."/>
        </authorList>
    </citation>
    <scope>NUCLEOTIDE SEQUENCE [LARGE SCALE MRNA]</scope>
    <source>
        <strain>C57BL/6J</strain>
        <tissue>Liver</tissue>
        <tissue>Skin</tissue>
    </source>
</reference>
<reference key="2">
    <citation type="journal article" date="2009" name="PLoS Biol.">
        <title>Lineage-specific biology revealed by a finished genome assembly of the mouse.</title>
        <authorList>
            <person name="Church D.M."/>
            <person name="Goodstadt L."/>
            <person name="Hillier L.W."/>
            <person name="Zody M.C."/>
            <person name="Goldstein S."/>
            <person name="She X."/>
            <person name="Bult C.J."/>
            <person name="Agarwala R."/>
            <person name="Cherry J.L."/>
            <person name="DiCuccio M."/>
            <person name="Hlavina W."/>
            <person name="Kapustin Y."/>
            <person name="Meric P."/>
            <person name="Maglott D."/>
            <person name="Birtle Z."/>
            <person name="Marques A.C."/>
            <person name="Graves T."/>
            <person name="Zhou S."/>
            <person name="Teague B."/>
            <person name="Potamousis K."/>
            <person name="Churas C."/>
            <person name="Place M."/>
            <person name="Herschleb J."/>
            <person name="Runnheim R."/>
            <person name="Forrest D."/>
            <person name="Amos-Landgraf J."/>
            <person name="Schwartz D.C."/>
            <person name="Cheng Z."/>
            <person name="Lindblad-Toh K."/>
            <person name="Eichler E.E."/>
            <person name="Ponting C.P."/>
        </authorList>
    </citation>
    <scope>NUCLEOTIDE SEQUENCE [LARGE SCALE GENOMIC DNA]</scope>
    <source>
        <strain>C57BL/6J</strain>
    </source>
</reference>
<reference key="3">
    <citation type="journal article" date="2004" name="Genome Res.">
        <title>The status, quality, and expansion of the NIH full-length cDNA project: the Mammalian Gene Collection (MGC).</title>
        <authorList>
            <consortium name="The MGC Project Team"/>
        </authorList>
    </citation>
    <scope>NUCLEOTIDE SEQUENCE [LARGE SCALE MRNA] OF 380-542</scope>
    <source>
        <strain>Czech II</strain>
        <tissue>Mammary tumor</tissue>
    </source>
</reference>
<organism>
    <name type="scientific">Mus musculus</name>
    <name type="common">Mouse</name>
    <dbReference type="NCBI Taxonomy" id="10090"/>
    <lineage>
        <taxon>Eukaryota</taxon>
        <taxon>Metazoa</taxon>
        <taxon>Chordata</taxon>
        <taxon>Craniata</taxon>
        <taxon>Vertebrata</taxon>
        <taxon>Euteleostomi</taxon>
        <taxon>Mammalia</taxon>
        <taxon>Eutheria</taxon>
        <taxon>Euarchontoglires</taxon>
        <taxon>Glires</taxon>
        <taxon>Rodentia</taxon>
        <taxon>Myomorpha</taxon>
        <taxon>Muroidea</taxon>
        <taxon>Muridae</taxon>
        <taxon>Murinae</taxon>
        <taxon>Mus</taxon>
        <taxon>Mus</taxon>
    </lineage>
</organism>
<feature type="chain" id="PRO_0000189567" description="Chondroitin sulfate N-acetylgalactosaminyltransferase 2">
    <location>
        <begin position="1"/>
        <end position="542"/>
    </location>
</feature>
<feature type="topological domain" description="Cytoplasmic" evidence="2">
    <location>
        <begin position="1"/>
        <end position="13"/>
    </location>
</feature>
<feature type="transmembrane region" description="Helical; Signal-anchor for type II membrane protein" evidence="2">
    <location>
        <begin position="14"/>
        <end position="34"/>
    </location>
</feature>
<feature type="topological domain" description="Lumenal" evidence="2">
    <location>
        <begin position="35"/>
        <end position="542"/>
    </location>
</feature>
<feature type="coiled-coil region" evidence="2">
    <location>
        <begin position="59"/>
        <end position="105"/>
    </location>
</feature>
<feature type="binding site" evidence="2">
    <location>
        <position position="369"/>
    </location>
    <ligand>
        <name>a divalent metal cation</name>
        <dbReference type="ChEBI" id="CHEBI:60240"/>
    </ligand>
</feature>
<feature type="binding site" evidence="2">
    <location>
        <position position="486"/>
    </location>
    <ligand>
        <name>a divalent metal cation</name>
        <dbReference type="ChEBI" id="CHEBI:60240"/>
    </ligand>
</feature>
<feature type="glycosylation site" description="N-linked (GlcNAc...) asparagine" evidence="2">
    <location>
        <position position="41"/>
    </location>
</feature>
<feature type="glycosylation site" description="N-linked (GlcNAc...) asparagine" evidence="2">
    <location>
        <position position="333"/>
    </location>
</feature>
<feature type="sequence conflict" description="In Ref. 1; BAB31761." evidence="3" ref="1">
    <original>S</original>
    <variation>N</variation>
    <location>
        <position position="397"/>
    </location>
</feature>
<feature type="sequence conflict" description="In Ref. 3; AAH23112." evidence="3" ref="3">
    <original>T</original>
    <variation>A</variation>
    <location>
        <position position="540"/>
    </location>
</feature>
<comment type="function">
    <text evidence="1">Transfers 1,4-N-acetylgalactosamine (GalNAc) from UDP-GalNAc to the non-reducing end of glucuronic acid (GlcUA). Required for addition of the first GalNAc to the core tetrasaccharide linker and for elongation of chondroitin chains (By similarity).</text>
</comment>
<comment type="catalytic activity">
    <reaction>
        <text>3-O-(beta-D-GlcA-(1-&gt;3)-beta-D-Gal-(1-&gt;3)-beta-D-Gal-(1-&gt;4)-beta-D-Xyl)-L-seryl-[protein] + UDP-N-acetyl-alpha-D-galactosamine = 3-O-(beta-D-GalNAc-(1-&gt;4)-beta-D-GlcA-(1-&gt;3)-beta-D-Gal-(1-&gt;3)-beta-D-Gal-(1-&gt;4)-beta-D-Xyl)-L-seryl-[protein] + UDP + H(+)</text>
        <dbReference type="Rhea" id="RHEA:23464"/>
        <dbReference type="Rhea" id="RHEA-COMP:12573"/>
        <dbReference type="Rhea" id="RHEA-COMP:12575"/>
        <dbReference type="ChEBI" id="CHEBI:15378"/>
        <dbReference type="ChEBI" id="CHEBI:58223"/>
        <dbReference type="ChEBI" id="CHEBI:67138"/>
        <dbReference type="ChEBI" id="CHEBI:132093"/>
        <dbReference type="ChEBI" id="CHEBI:132105"/>
        <dbReference type="EC" id="2.4.1.174"/>
    </reaction>
</comment>
<comment type="subcellular location">
    <subcellularLocation>
        <location evidence="1">Golgi apparatus</location>
        <location evidence="1">Golgi stack membrane</location>
        <topology evidence="1">Single-pass type II membrane protein</topology>
    </subcellularLocation>
</comment>
<comment type="similarity">
    <text evidence="3">Belongs to the chondroitin N-acetylgalactosaminyltransferase family.</text>
</comment>
<name>CGAT2_MOUSE</name>
<evidence type="ECO:0000250" key="1"/>
<evidence type="ECO:0000255" key="2"/>
<evidence type="ECO:0000305" key="3"/>
<keyword id="KW-0175">Coiled coil</keyword>
<keyword id="KW-0325">Glycoprotein</keyword>
<keyword id="KW-0333">Golgi apparatus</keyword>
<keyword id="KW-0472">Membrane</keyword>
<keyword id="KW-0479">Metal-binding</keyword>
<keyword id="KW-1185">Reference proteome</keyword>
<keyword id="KW-0735">Signal-anchor</keyword>
<keyword id="KW-0808">Transferase</keyword>
<keyword id="KW-0812">Transmembrane</keyword>
<keyword id="KW-1133">Transmembrane helix</keyword>
<sequence>MSRRGSILHSRTQWLLLGLALLFSLVLFMYLLECAPQTDGNASLPGVVRENYGKEYYQALLQEQEEHYQTRATSLKRQIAQLKQELQDMSEKMRALQERKKLGANGVGYPGNREQAPSDLLEFLHSQIDRAEVSVGAKLPSEYGVVPFESFTLMKVFQLEMGLTRHPEEKPVRKDKRDELVEVIEAGVEVINNPDEDDAQEDEEGPLGEKLIFNENDFIEGYYRTERDKGTQYELFFKKADLMEYRHVTLFRPFGPLMKVKNELIDITRSVINIIVPLAERTEAFSQFMQNFRDVCIHQDKRIHLTVVYFGKEGLSKVKSILESVSSESDFHNYTLVSLDEEFNRGRGLNVGARAWDKGEVLMFFCDVDIYFSAEFLNSCRLNAEPGKKVFYPVVFSLYNPAIVYANQDVPPPVEQQLVHKKDSGFWRDFGFGMTCQYQSDFLSVGGFDMEVKGWGGEDVHLYRKYLHGDLIVIRTPVPGLFHLWHEKHCADELTPEQYRMCIQSKAMNEASHSHLGMMVFREEIEMHLRKQAYRTNSETAG</sequence>
<accession>Q8C1F4</accession>
<accession>Q6PAP6</accession>
<accession>Q8R5A2</accession>
<accession>Q9D2M1</accession>
<dbReference type="EC" id="2.4.1.174"/>
<dbReference type="EMBL" id="AK019496">
    <property type="protein sequence ID" value="BAB31761.2"/>
    <property type="molecule type" value="mRNA"/>
</dbReference>
<dbReference type="EMBL" id="AK028045">
    <property type="protein sequence ID" value="BAC25717.1"/>
    <property type="molecule type" value="mRNA"/>
</dbReference>
<dbReference type="EMBL" id="AC135861">
    <property type="status" value="NOT_ANNOTATED_CDS"/>
    <property type="molecule type" value="Genomic_DNA"/>
</dbReference>
<dbReference type="EMBL" id="BC023112">
    <property type="protein sequence ID" value="AAH23112.2"/>
    <property type="molecule type" value="mRNA"/>
</dbReference>
<dbReference type="CCDS" id="CCDS20469.1"/>
<dbReference type="RefSeq" id="NP_001349078.1">
    <property type="nucleotide sequence ID" value="NM_001362149.1"/>
</dbReference>
<dbReference type="RefSeq" id="NP_084441.3">
    <property type="nucleotide sequence ID" value="NM_030165.3"/>
</dbReference>
<dbReference type="RefSeq" id="XP_006506839.1">
    <property type="nucleotide sequence ID" value="XM_006506776.3"/>
</dbReference>
<dbReference type="RefSeq" id="XP_006506840.1">
    <property type="nucleotide sequence ID" value="XM_006506777.5"/>
</dbReference>
<dbReference type="RefSeq" id="XP_006506841.1">
    <property type="nucleotide sequence ID" value="XM_006506778.3"/>
</dbReference>
<dbReference type="SMR" id="Q8C1F4"/>
<dbReference type="BioGRID" id="219612">
    <property type="interactions" value="2"/>
</dbReference>
<dbReference type="FunCoup" id="Q8C1F4">
    <property type="interactions" value="1010"/>
</dbReference>
<dbReference type="STRING" id="10090.ENSMUSP00000039819"/>
<dbReference type="CAZy" id="GT7">
    <property type="family name" value="Glycosyltransferase Family 7"/>
</dbReference>
<dbReference type="GlyCosmos" id="Q8C1F4">
    <property type="glycosylation" value="2 sites, No reported glycans"/>
</dbReference>
<dbReference type="GlyGen" id="Q8C1F4">
    <property type="glycosylation" value="2 sites"/>
</dbReference>
<dbReference type="iPTMnet" id="Q8C1F4"/>
<dbReference type="PhosphoSitePlus" id="Q8C1F4"/>
<dbReference type="PaxDb" id="10090-ENSMUSP00000039819"/>
<dbReference type="ProteomicsDB" id="283894"/>
<dbReference type="Pumba" id="Q8C1F4"/>
<dbReference type="Antibodypedia" id="26871">
    <property type="antibodies" value="203 antibodies from 26 providers"/>
</dbReference>
<dbReference type="DNASU" id="78752"/>
<dbReference type="Ensembl" id="ENSMUST00000049344.15">
    <property type="protein sequence ID" value="ENSMUSP00000039819.9"/>
    <property type="gene ID" value="ENSMUSG00000042042.15"/>
</dbReference>
<dbReference type="GeneID" id="78752"/>
<dbReference type="KEGG" id="mmu:78752"/>
<dbReference type="UCSC" id="uc009dll.2">
    <property type="organism name" value="mouse"/>
</dbReference>
<dbReference type="AGR" id="MGI:1926002"/>
<dbReference type="CTD" id="55454"/>
<dbReference type="MGI" id="MGI:1926002">
    <property type="gene designation" value="Csgalnact2"/>
</dbReference>
<dbReference type="VEuPathDB" id="HostDB:ENSMUSG00000042042"/>
<dbReference type="eggNOG" id="KOG3588">
    <property type="taxonomic scope" value="Eukaryota"/>
</dbReference>
<dbReference type="GeneTree" id="ENSGT01050000244968"/>
<dbReference type="HOGENOM" id="CLU_025958_0_1_1"/>
<dbReference type="InParanoid" id="Q8C1F4"/>
<dbReference type="OMA" id="GMMVFRE"/>
<dbReference type="OrthoDB" id="431432at2759"/>
<dbReference type="PhylomeDB" id="Q8C1F4"/>
<dbReference type="TreeFam" id="TF318303"/>
<dbReference type="BRENDA" id="2.4.1.174">
    <property type="organism ID" value="3474"/>
</dbReference>
<dbReference type="Reactome" id="R-MMU-2022870">
    <property type="pathway name" value="Chondroitin sulfate biosynthesis"/>
</dbReference>
<dbReference type="BioGRID-ORCS" id="78752">
    <property type="hits" value="1 hit in 79 CRISPR screens"/>
</dbReference>
<dbReference type="ChiTaRS" id="Csgalnact2">
    <property type="organism name" value="mouse"/>
</dbReference>
<dbReference type="PRO" id="PR:Q8C1F4"/>
<dbReference type="Proteomes" id="UP000000589">
    <property type="component" value="Chromosome 6"/>
</dbReference>
<dbReference type="RNAct" id="Q8C1F4">
    <property type="molecule type" value="protein"/>
</dbReference>
<dbReference type="Bgee" id="ENSMUSG00000042042">
    <property type="expression patterns" value="Expressed in left lung lobe and 248 other cell types or tissues"/>
</dbReference>
<dbReference type="ExpressionAtlas" id="Q8C1F4">
    <property type="expression patterns" value="baseline and differential"/>
</dbReference>
<dbReference type="GO" id="GO:0005794">
    <property type="term" value="C:Golgi apparatus"/>
    <property type="evidence" value="ECO:0000314"/>
    <property type="project" value="MGI"/>
</dbReference>
<dbReference type="GO" id="GO:0032580">
    <property type="term" value="C:Golgi cisterna membrane"/>
    <property type="evidence" value="ECO:0007669"/>
    <property type="project" value="UniProtKB-SubCell"/>
</dbReference>
<dbReference type="GO" id="GO:0008376">
    <property type="term" value="F:acetylgalactosaminyltransferase activity"/>
    <property type="evidence" value="ECO:0000314"/>
    <property type="project" value="MGI"/>
</dbReference>
<dbReference type="GO" id="GO:0047238">
    <property type="term" value="F:glucuronosyl-N-acetylgalactosaminyl-proteoglycan 4-beta-N-acetylgalactosaminyltransferase activity"/>
    <property type="evidence" value="ECO:0000315"/>
    <property type="project" value="MGI"/>
</dbReference>
<dbReference type="GO" id="GO:0047237">
    <property type="term" value="F:glucuronylgalactosylproteoglycan 4-beta-N-acetylgalactosaminyltransferase activity"/>
    <property type="evidence" value="ECO:0007669"/>
    <property type="project" value="UniProtKB-EC"/>
</dbReference>
<dbReference type="GO" id="GO:0046872">
    <property type="term" value="F:metal ion binding"/>
    <property type="evidence" value="ECO:0007669"/>
    <property type="project" value="UniProtKB-KW"/>
</dbReference>
<dbReference type="GO" id="GO:0050650">
    <property type="term" value="P:chondroitin sulfate proteoglycan biosynthetic process"/>
    <property type="evidence" value="ECO:0000315"/>
    <property type="project" value="MGI"/>
</dbReference>
<dbReference type="GO" id="GO:0050651">
    <property type="term" value="P:dermatan sulfate proteoglycan biosynthetic process"/>
    <property type="evidence" value="ECO:0007669"/>
    <property type="project" value="Ensembl"/>
</dbReference>
<dbReference type="GO" id="GO:0030166">
    <property type="term" value="P:proteoglycan biosynthetic process"/>
    <property type="evidence" value="ECO:0000250"/>
    <property type="project" value="UniProtKB"/>
</dbReference>
<dbReference type="FunFam" id="3.90.550.10:FF:000059">
    <property type="entry name" value="Hexosyltransferase"/>
    <property type="match status" value="1"/>
</dbReference>
<dbReference type="Gene3D" id="3.90.550.10">
    <property type="entry name" value="Spore Coat Polysaccharide Biosynthesis Protein SpsA, Chain A"/>
    <property type="match status" value="1"/>
</dbReference>
<dbReference type="InterPro" id="IPR008428">
    <property type="entry name" value="Chond_GalNAc"/>
</dbReference>
<dbReference type="InterPro" id="IPR051227">
    <property type="entry name" value="CS_glycosyltransferase"/>
</dbReference>
<dbReference type="InterPro" id="IPR029044">
    <property type="entry name" value="Nucleotide-diphossugar_trans"/>
</dbReference>
<dbReference type="PANTHER" id="PTHR12369:SF20">
    <property type="entry name" value="CHONDROITIN SULFATE N-ACETYLGALACTOSAMINYLTRANSFERASE 2"/>
    <property type="match status" value="1"/>
</dbReference>
<dbReference type="PANTHER" id="PTHR12369">
    <property type="entry name" value="CHONDROITIN SYNTHASE"/>
    <property type="match status" value="1"/>
</dbReference>
<dbReference type="Pfam" id="PF05679">
    <property type="entry name" value="CHGN"/>
    <property type="match status" value="1"/>
</dbReference>
<dbReference type="SUPFAM" id="SSF53448">
    <property type="entry name" value="Nucleotide-diphospho-sugar transferases"/>
    <property type="match status" value="1"/>
</dbReference>
<protein>
    <recommendedName>
        <fullName>Chondroitin sulfate N-acetylgalactosaminyltransferase 2</fullName>
        <ecNumber>2.4.1.174</ecNumber>
    </recommendedName>
    <alternativeName>
        <fullName>Chondroitin beta-1,4-N-acetylgalactosaminyltransferase 2</fullName>
        <shortName>Beta4GalNAcT-2</shortName>
        <shortName>GalNAcT-2</shortName>
    </alternativeName>
</protein>
<proteinExistence type="evidence at transcript level"/>